<proteinExistence type="uncertain"/>
<accession>A0A023PXH9</accession>
<evidence type="ECO:0000255" key="1"/>
<evidence type="ECO:0000269" key="2">
    <source>
    </source>
</evidence>
<evidence type="ECO:0000305" key="3"/>
<evidence type="ECO:0000305" key="4">
    <source>
    </source>
</evidence>
<evidence type="ECO:0000312" key="5">
    <source>
        <dbReference type="SGD" id="S000002556"/>
    </source>
</evidence>
<keyword id="KW-0472">Membrane</keyword>
<keyword id="KW-0812">Transmembrane</keyword>
<keyword id="KW-1133">Transmembrane helix</keyword>
<sequence>MPFFVNVKISKSVFRSFRLSFSSFQDFSVFFFNSFNCLHSMLKFVNLDSKSQFKSLVESNSFMKDFFWLVSSSILSLNDSLICLRDLICSFLASLEDCNFLHSTNKFSLSSKVKFISFDEFAVSTPLWELLPANSGSTSFVSLLLKILEIENRFVLSPSSPLPHSSAFKLAILVTPFVETLSWLNELSMLFAYCPAELSLSLFFLCLLLWDIFERLVESLDRCVFTRLYSTLWSY</sequence>
<feature type="chain" id="PRO_0000430981" description="Putative uncharacterized membrane protein YDR149C">
    <location>
        <begin position="1"/>
        <end position="235"/>
    </location>
</feature>
<feature type="transmembrane region" description="Helical; Name=1" evidence="1">
    <location>
        <begin position="167"/>
        <end position="187"/>
    </location>
</feature>
<feature type="transmembrane region" description="Helical; Name=2" evidence="1">
    <location>
        <begin position="190"/>
        <end position="210"/>
    </location>
</feature>
<organism>
    <name type="scientific">Saccharomyces cerevisiae (strain ATCC 204508 / S288c)</name>
    <name type="common">Baker's yeast</name>
    <dbReference type="NCBI Taxonomy" id="559292"/>
    <lineage>
        <taxon>Eukaryota</taxon>
        <taxon>Fungi</taxon>
        <taxon>Dikarya</taxon>
        <taxon>Ascomycota</taxon>
        <taxon>Saccharomycotina</taxon>
        <taxon>Saccharomycetes</taxon>
        <taxon>Saccharomycetales</taxon>
        <taxon>Saccharomycetaceae</taxon>
        <taxon>Saccharomyces</taxon>
    </lineage>
</organism>
<name>YD149_YEAST</name>
<comment type="subcellular location">
    <subcellularLocation>
        <location evidence="1">Membrane</location>
        <topology evidence="1">Multi-pass membrane protein</topology>
    </subcellularLocation>
</comment>
<comment type="disruption phenotype">
    <text evidence="2">Cannot grow under anaerobic growth conditions.</text>
</comment>
<comment type="miscellaneous">
    <text evidence="3">Partially overlaps NUM1. Disruption phenotypes caused by deletion of this gene may also be a result of a defect in its overlapping gene.</text>
</comment>
<comment type="caution">
    <text evidence="4">Product of a dubious gene prediction unlikely to encode a functional protein. Because of that it is not part of the S.cerevisiae S288c complete/reference proteome set.</text>
</comment>
<dbReference type="EMBL" id="KJ412217">
    <property type="protein sequence ID" value="AHX39260.1"/>
    <property type="molecule type" value="Genomic_DNA"/>
</dbReference>
<dbReference type="PIR" id="S69757">
    <property type="entry name" value="S69757"/>
</dbReference>
<dbReference type="STRING" id="4932.YDR149C"/>
<dbReference type="PaxDb" id="4932-YDR149C"/>
<dbReference type="EnsemblFungi" id="YDR149C_mRNA">
    <property type="protein sequence ID" value="YDR149C"/>
    <property type="gene ID" value="YDR149C"/>
</dbReference>
<dbReference type="AGR" id="SGD:S000002556"/>
<dbReference type="SGD" id="S000002556">
    <property type="gene designation" value="YDR149C"/>
</dbReference>
<dbReference type="HOGENOM" id="CLU_1397069_0_0_1"/>
<dbReference type="GO" id="GO:0016020">
    <property type="term" value="C:membrane"/>
    <property type="evidence" value="ECO:0007669"/>
    <property type="project" value="UniProtKB-SubCell"/>
</dbReference>
<reference key="1">
    <citation type="journal article" date="1997" name="Nature">
        <title>The nucleotide sequence of Saccharomyces cerevisiae chromosome IV.</title>
        <authorList>
            <person name="Jacq C."/>
            <person name="Alt-Moerbe J."/>
            <person name="Andre B."/>
            <person name="Arnold W."/>
            <person name="Bahr A."/>
            <person name="Ballesta J.P.G."/>
            <person name="Bargues M."/>
            <person name="Baron L."/>
            <person name="Becker A."/>
            <person name="Biteau N."/>
            <person name="Bloecker H."/>
            <person name="Blugeon C."/>
            <person name="Boskovic J."/>
            <person name="Brandt P."/>
            <person name="Brueckner M."/>
            <person name="Buitrago M.J."/>
            <person name="Coster F."/>
            <person name="Delaveau T."/>
            <person name="del Rey F."/>
            <person name="Dujon B."/>
            <person name="Eide L.G."/>
            <person name="Garcia-Cantalejo J.M."/>
            <person name="Goffeau A."/>
            <person name="Gomez-Peris A."/>
            <person name="Granotier C."/>
            <person name="Hanemann V."/>
            <person name="Hankeln T."/>
            <person name="Hoheisel J.D."/>
            <person name="Jaeger W."/>
            <person name="Jimenez A."/>
            <person name="Jonniaux J.-L."/>
            <person name="Kraemer C."/>
            <person name="Kuester H."/>
            <person name="Laamanen P."/>
            <person name="Legros Y."/>
            <person name="Louis E.J."/>
            <person name="Moeller-Rieker S."/>
            <person name="Monnet A."/>
            <person name="Moro M."/>
            <person name="Mueller-Auer S."/>
            <person name="Nussbaumer B."/>
            <person name="Paricio N."/>
            <person name="Paulin L."/>
            <person name="Perea J."/>
            <person name="Perez-Alonso M."/>
            <person name="Perez-Ortin J.E."/>
            <person name="Pohl T.M."/>
            <person name="Prydz H."/>
            <person name="Purnelle B."/>
            <person name="Rasmussen S.W."/>
            <person name="Remacha M.A."/>
            <person name="Revuelta J.L."/>
            <person name="Rieger M."/>
            <person name="Salom D."/>
            <person name="Saluz H.P."/>
            <person name="Saiz J.E."/>
            <person name="Saren A.-M."/>
            <person name="Schaefer M."/>
            <person name="Scharfe M."/>
            <person name="Schmidt E.R."/>
            <person name="Schneider C."/>
            <person name="Scholler P."/>
            <person name="Schwarz S."/>
            <person name="Soler-Mira A."/>
            <person name="Urrestarazu L.A."/>
            <person name="Verhasselt P."/>
            <person name="Vissers S."/>
            <person name="Voet M."/>
            <person name="Volckaert G."/>
            <person name="Wagner G."/>
            <person name="Wambutt R."/>
            <person name="Wedler E."/>
            <person name="Wedler H."/>
            <person name="Woelfl S."/>
            <person name="Harris D.E."/>
            <person name="Bowman S."/>
            <person name="Brown D."/>
            <person name="Churcher C.M."/>
            <person name="Connor R."/>
            <person name="Dedman K."/>
            <person name="Gentles S."/>
            <person name="Hamlin N."/>
            <person name="Hunt S."/>
            <person name="Jones L."/>
            <person name="McDonald S."/>
            <person name="Murphy L.D."/>
            <person name="Niblett D."/>
            <person name="Odell C."/>
            <person name="Oliver K."/>
            <person name="Rajandream M.A."/>
            <person name="Richards C."/>
            <person name="Shore L."/>
            <person name="Walsh S.V."/>
            <person name="Barrell B.G."/>
            <person name="Dietrich F.S."/>
            <person name="Mulligan J.T."/>
            <person name="Allen E."/>
            <person name="Araujo R."/>
            <person name="Aviles E."/>
            <person name="Berno A."/>
            <person name="Carpenter J."/>
            <person name="Chen E."/>
            <person name="Cherry J.M."/>
            <person name="Chung E."/>
            <person name="Duncan M."/>
            <person name="Hunicke-Smith S."/>
            <person name="Hyman R.W."/>
            <person name="Komp C."/>
            <person name="Lashkari D."/>
            <person name="Lew H."/>
            <person name="Lin D."/>
            <person name="Mosedale D."/>
            <person name="Nakahara K."/>
            <person name="Namath A."/>
            <person name="Oefner P."/>
            <person name="Oh C."/>
            <person name="Petel F.X."/>
            <person name="Roberts D."/>
            <person name="Schramm S."/>
            <person name="Schroeder M."/>
            <person name="Shogren T."/>
            <person name="Shroff N."/>
            <person name="Winant A."/>
            <person name="Yelton M.A."/>
            <person name="Botstein D."/>
            <person name="Davis R.W."/>
            <person name="Johnston M."/>
            <person name="Andrews S."/>
            <person name="Brinkman R."/>
            <person name="Cooper J."/>
            <person name="Ding H."/>
            <person name="Du Z."/>
            <person name="Favello A."/>
            <person name="Fulton L."/>
            <person name="Gattung S."/>
            <person name="Greco T."/>
            <person name="Hallsworth K."/>
            <person name="Hawkins J."/>
            <person name="Hillier L.W."/>
            <person name="Jier M."/>
            <person name="Johnson D."/>
            <person name="Johnston L."/>
            <person name="Kirsten J."/>
            <person name="Kucaba T."/>
            <person name="Langston Y."/>
            <person name="Latreille P."/>
            <person name="Le T."/>
            <person name="Mardis E."/>
            <person name="Menezes S."/>
            <person name="Miller N."/>
            <person name="Nhan M."/>
            <person name="Pauley A."/>
            <person name="Peluso D."/>
            <person name="Rifkin L."/>
            <person name="Riles L."/>
            <person name="Taich A."/>
            <person name="Trevaskis E."/>
            <person name="Vignati D."/>
            <person name="Wilcox L."/>
            <person name="Wohldman P."/>
            <person name="Vaudin M."/>
            <person name="Wilson R."/>
            <person name="Waterston R."/>
            <person name="Albermann K."/>
            <person name="Hani J."/>
            <person name="Heumann K."/>
            <person name="Kleine K."/>
            <person name="Mewes H.-W."/>
            <person name="Zollner A."/>
            <person name="Zaccaria P."/>
        </authorList>
    </citation>
    <scope>NUCLEOTIDE SEQUENCE [LARGE SCALE GENOMIC DNA]</scope>
    <source>
        <strain>ATCC 204508 / S288c</strain>
    </source>
</reference>
<reference key="2">
    <citation type="journal article" date="2014" name="G3 (Bethesda)">
        <title>The reference genome sequence of Saccharomyces cerevisiae: Then and now.</title>
        <authorList>
            <person name="Engel S.R."/>
            <person name="Dietrich F.S."/>
            <person name="Fisk D.G."/>
            <person name="Binkley G."/>
            <person name="Balakrishnan R."/>
            <person name="Costanzo M.C."/>
            <person name="Dwight S.S."/>
            <person name="Hitz B.C."/>
            <person name="Karra K."/>
            <person name="Nash R.S."/>
            <person name="Weng S."/>
            <person name="Wong E.D."/>
            <person name="Lloyd P."/>
            <person name="Skrzypek M.S."/>
            <person name="Miyasato S.R."/>
            <person name="Simison M."/>
            <person name="Cherry J.M."/>
        </authorList>
    </citation>
    <scope>GENOME REANNOTATION</scope>
    <source>
        <strain>ATCC 204508 / S288c</strain>
    </source>
</reference>
<reference key="3">
    <citation type="journal article" date="2006" name="FEMS Yeast Res.">
        <title>Why does Kluyveromyces lactis not grow under anaerobic conditions? Comparison of essential anaerobic genes of Saccharomyces cerevisiae with the Kluyveromyces lactis genome.</title>
        <authorList>
            <person name="Snoek I.S."/>
            <person name="Steensma H.Y."/>
        </authorList>
    </citation>
    <scope>DISRUPTION PHENOTYPE</scope>
</reference>
<protein>
    <recommendedName>
        <fullName evidence="3">Putative uncharacterized membrane protein YDR149C</fullName>
    </recommendedName>
</protein>
<gene>
    <name evidence="5" type="ordered locus">YDR149C</name>
</gene>